<accession>A7HM27</accession>
<sequence length="123" mass="14116">MARIVGVEIPSNKKVHIALRYLYGIGPTRAMEICKNTGVDPDKRVKELTEDEISKIASFIQQNYKVEGELRTEVMRNIKRLMDIGCYRGLRHKLGLPVRGQRTRSNARTRKGPRPSRIKKKGK</sequence>
<protein>
    <recommendedName>
        <fullName evidence="1">Small ribosomal subunit protein uS13</fullName>
    </recommendedName>
    <alternativeName>
        <fullName evidence="3">30S ribosomal protein S13</fullName>
    </alternativeName>
</protein>
<reference key="1">
    <citation type="submission" date="2007-07" db="EMBL/GenBank/DDBJ databases">
        <title>Complete sequence of Fervidobacterium nodosum Rt17-B1.</title>
        <authorList>
            <consortium name="US DOE Joint Genome Institute"/>
            <person name="Copeland A."/>
            <person name="Lucas S."/>
            <person name="Lapidus A."/>
            <person name="Barry K."/>
            <person name="Glavina del Rio T."/>
            <person name="Dalin E."/>
            <person name="Tice H."/>
            <person name="Pitluck S."/>
            <person name="Saunders E."/>
            <person name="Brettin T."/>
            <person name="Bruce D."/>
            <person name="Detter J.C."/>
            <person name="Han C."/>
            <person name="Schmutz J."/>
            <person name="Larimer F."/>
            <person name="Land M."/>
            <person name="Hauser L."/>
            <person name="Kyrpides N."/>
            <person name="Mikhailova N."/>
            <person name="Nelson K."/>
            <person name="Gogarten J.P."/>
            <person name="Noll K."/>
            <person name="Richardson P."/>
        </authorList>
    </citation>
    <scope>NUCLEOTIDE SEQUENCE [LARGE SCALE GENOMIC DNA]</scope>
    <source>
        <strain>ATCC 35602 / DSM 5306 / Rt17-B1</strain>
    </source>
</reference>
<gene>
    <name evidence="1" type="primary">rpsM</name>
    <name type="ordered locus">Fnod_1113</name>
</gene>
<evidence type="ECO:0000255" key="1">
    <source>
        <dbReference type="HAMAP-Rule" id="MF_01315"/>
    </source>
</evidence>
<evidence type="ECO:0000256" key="2">
    <source>
        <dbReference type="SAM" id="MobiDB-lite"/>
    </source>
</evidence>
<evidence type="ECO:0000305" key="3"/>
<keyword id="KW-1185">Reference proteome</keyword>
<keyword id="KW-0687">Ribonucleoprotein</keyword>
<keyword id="KW-0689">Ribosomal protein</keyword>
<keyword id="KW-0694">RNA-binding</keyword>
<keyword id="KW-0699">rRNA-binding</keyword>
<keyword id="KW-0820">tRNA-binding</keyword>
<organism>
    <name type="scientific">Fervidobacterium nodosum (strain ATCC 35602 / DSM 5306 / Rt17-B1)</name>
    <dbReference type="NCBI Taxonomy" id="381764"/>
    <lineage>
        <taxon>Bacteria</taxon>
        <taxon>Thermotogati</taxon>
        <taxon>Thermotogota</taxon>
        <taxon>Thermotogae</taxon>
        <taxon>Thermotogales</taxon>
        <taxon>Fervidobacteriaceae</taxon>
        <taxon>Fervidobacterium</taxon>
    </lineage>
</organism>
<feature type="chain" id="PRO_1000073210" description="Small ribosomal subunit protein uS13">
    <location>
        <begin position="1"/>
        <end position="123"/>
    </location>
</feature>
<feature type="region of interest" description="Disordered" evidence="2">
    <location>
        <begin position="97"/>
        <end position="123"/>
    </location>
</feature>
<feature type="compositionally biased region" description="Basic residues" evidence="2">
    <location>
        <begin position="101"/>
        <end position="123"/>
    </location>
</feature>
<dbReference type="EMBL" id="CP000771">
    <property type="protein sequence ID" value="ABS60960.1"/>
    <property type="molecule type" value="Genomic_DNA"/>
</dbReference>
<dbReference type="RefSeq" id="WP_011994273.1">
    <property type="nucleotide sequence ID" value="NC_009718.1"/>
</dbReference>
<dbReference type="SMR" id="A7HM27"/>
<dbReference type="STRING" id="381764.Fnod_1113"/>
<dbReference type="KEGG" id="fno:Fnod_1113"/>
<dbReference type="eggNOG" id="COG0099">
    <property type="taxonomic scope" value="Bacteria"/>
</dbReference>
<dbReference type="HOGENOM" id="CLU_103849_1_2_0"/>
<dbReference type="OrthoDB" id="9803610at2"/>
<dbReference type="Proteomes" id="UP000002415">
    <property type="component" value="Chromosome"/>
</dbReference>
<dbReference type="GO" id="GO:0005829">
    <property type="term" value="C:cytosol"/>
    <property type="evidence" value="ECO:0007669"/>
    <property type="project" value="TreeGrafter"/>
</dbReference>
<dbReference type="GO" id="GO:0015935">
    <property type="term" value="C:small ribosomal subunit"/>
    <property type="evidence" value="ECO:0007669"/>
    <property type="project" value="TreeGrafter"/>
</dbReference>
<dbReference type="GO" id="GO:0019843">
    <property type="term" value="F:rRNA binding"/>
    <property type="evidence" value="ECO:0007669"/>
    <property type="project" value="UniProtKB-UniRule"/>
</dbReference>
<dbReference type="GO" id="GO:0003735">
    <property type="term" value="F:structural constituent of ribosome"/>
    <property type="evidence" value="ECO:0007669"/>
    <property type="project" value="InterPro"/>
</dbReference>
<dbReference type="GO" id="GO:0000049">
    <property type="term" value="F:tRNA binding"/>
    <property type="evidence" value="ECO:0007669"/>
    <property type="project" value="UniProtKB-UniRule"/>
</dbReference>
<dbReference type="GO" id="GO:0006412">
    <property type="term" value="P:translation"/>
    <property type="evidence" value="ECO:0007669"/>
    <property type="project" value="UniProtKB-UniRule"/>
</dbReference>
<dbReference type="FunFam" id="1.10.8.50:FF:000001">
    <property type="entry name" value="30S ribosomal protein S13"/>
    <property type="match status" value="1"/>
</dbReference>
<dbReference type="FunFam" id="4.10.910.10:FF:000001">
    <property type="entry name" value="30S ribosomal protein S13"/>
    <property type="match status" value="1"/>
</dbReference>
<dbReference type="Gene3D" id="1.10.8.50">
    <property type="match status" value="1"/>
</dbReference>
<dbReference type="Gene3D" id="4.10.910.10">
    <property type="entry name" value="30s ribosomal protein s13, domain 2"/>
    <property type="match status" value="1"/>
</dbReference>
<dbReference type="HAMAP" id="MF_01315">
    <property type="entry name" value="Ribosomal_uS13"/>
    <property type="match status" value="1"/>
</dbReference>
<dbReference type="InterPro" id="IPR027437">
    <property type="entry name" value="Rbsml_uS13_C"/>
</dbReference>
<dbReference type="InterPro" id="IPR001892">
    <property type="entry name" value="Ribosomal_uS13"/>
</dbReference>
<dbReference type="InterPro" id="IPR010979">
    <property type="entry name" value="Ribosomal_uS13-like_H2TH"/>
</dbReference>
<dbReference type="InterPro" id="IPR019980">
    <property type="entry name" value="Ribosomal_uS13_bac-type"/>
</dbReference>
<dbReference type="InterPro" id="IPR018269">
    <property type="entry name" value="Ribosomal_uS13_CS"/>
</dbReference>
<dbReference type="NCBIfam" id="TIGR03631">
    <property type="entry name" value="uS13_bact"/>
    <property type="match status" value="1"/>
</dbReference>
<dbReference type="PANTHER" id="PTHR10871">
    <property type="entry name" value="30S RIBOSOMAL PROTEIN S13/40S RIBOSOMAL PROTEIN S18"/>
    <property type="match status" value="1"/>
</dbReference>
<dbReference type="PANTHER" id="PTHR10871:SF1">
    <property type="entry name" value="SMALL RIBOSOMAL SUBUNIT PROTEIN US13M"/>
    <property type="match status" value="1"/>
</dbReference>
<dbReference type="Pfam" id="PF00416">
    <property type="entry name" value="Ribosomal_S13"/>
    <property type="match status" value="1"/>
</dbReference>
<dbReference type="PIRSF" id="PIRSF002134">
    <property type="entry name" value="Ribosomal_S13"/>
    <property type="match status" value="1"/>
</dbReference>
<dbReference type="SUPFAM" id="SSF46946">
    <property type="entry name" value="S13-like H2TH domain"/>
    <property type="match status" value="1"/>
</dbReference>
<dbReference type="PROSITE" id="PS00646">
    <property type="entry name" value="RIBOSOMAL_S13_1"/>
    <property type="match status" value="1"/>
</dbReference>
<dbReference type="PROSITE" id="PS50159">
    <property type="entry name" value="RIBOSOMAL_S13_2"/>
    <property type="match status" value="1"/>
</dbReference>
<comment type="function">
    <text evidence="1">Located at the top of the head of the 30S subunit, it contacts several helices of the 16S rRNA. In the 70S ribosome it contacts the 23S rRNA (bridge B1a) and protein L5 of the 50S subunit (bridge B1b), connecting the 2 subunits; these bridges are implicated in subunit movement. Contacts the tRNAs in the A and P-sites.</text>
</comment>
<comment type="subunit">
    <text evidence="1">Part of the 30S ribosomal subunit. Forms a loose heterodimer with protein S19. Forms two bridges to the 50S subunit in the 70S ribosome.</text>
</comment>
<comment type="similarity">
    <text evidence="1">Belongs to the universal ribosomal protein uS13 family.</text>
</comment>
<name>RS13_FERNB</name>
<proteinExistence type="inferred from homology"/>